<feature type="chain" id="PRO_0000420594" description="Alpha-(1-&gt;6)-mannopyranosyltransferase Rv1459c">
    <location>
        <begin position="1"/>
        <end position="591"/>
    </location>
</feature>
<feature type="transmembrane region" description="Helical" evidence="1">
    <location>
        <begin position="40"/>
        <end position="60"/>
    </location>
</feature>
<feature type="transmembrane region" description="Helical" evidence="1">
    <location>
        <begin position="80"/>
        <end position="100"/>
    </location>
</feature>
<feature type="transmembrane region" description="Helical" evidence="1">
    <location>
        <begin position="117"/>
        <end position="137"/>
    </location>
</feature>
<feature type="transmembrane region" description="Helical" evidence="1">
    <location>
        <begin position="201"/>
        <end position="221"/>
    </location>
</feature>
<feature type="transmembrane region" description="Helical" evidence="1">
    <location>
        <begin position="235"/>
        <end position="255"/>
    </location>
</feature>
<feature type="transmembrane region" description="Helical" evidence="1">
    <location>
        <begin position="259"/>
        <end position="279"/>
    </location>
</feature>
<feature type="transmembrane region" description="Helical" evidence="1">
    <location>
        <begin position="321"/>
        <end position="341"/>
    </location>
</feature>
<feature type="transmembrane region" description="Helical" evidence="1">
    <location>
        <begin position="367"/>
        <end position="387"/>
    </location>
</feature>
<feature type="transmembrane region" description="Helical" evidence="1">
    <location>
        <begin position="408"/>
        <end position="428"/>
    </location>
</feature>
<feature type="transmembrane region" description="Helical" evidence="1">
    <location>
        <begin position="441"/>
        <end position="461"/>
    </location>
</feature>
<feature type="transmembrane region" description="Helical" evidence="1">
    <location>
        <begin position="473"/>
        <end position="493"/>
    </location>
</feature>
<feature type="transmembrane region" description="Helical" evidence="1">
    <location>
        <begin position="502"/>
        <end position="522"/>
    </location>
</feature>
<feature type="transmembrane region" description="Helical" evidence="1">
    <location>
        <begin position="527"/>
        <end position="547"/>
    </location>
</feature>
<feature type="region of interest" description="Disordered" evidence="2">
    <location>
        <begin position="569"/>
        <end position="591"/>
    </location>
</feature>
<feature type="compositionally biased region" description="Low complexity" evidence="2">
    <location>
        <begin position="574"/>
        <end position="584"/>
    </location>
</feature>
<accession>O53150</accession>
<accession>L0T9P4</accession>
<comment type="function">
    <text evidence="3">Catalyzes the addition of alpha-(1-&gt;6)-mannose residue.</text>
</comment>
<comment type="subcellular location">
    <subcellularLocation>
        <location evidence="5">Membrane</location>
        <topology evidence="4">Multi-pass membrane protein</topology>
    </subcellularLocation>
</comment>
<comment type="similarity">
    <text evidence="4">Belongs to the MptA/B family.</text>
</comment>
<name>Y1459_MYCTU</name>
<evidence type="ECO:0000255" key="1"/>
<evidence type="ECO:0000256" key="2">
    <source>
        <dbReference type="SAM" id="MobiDB-lite"/>
    </source>
</evidence>
<evidence type="ECO:0000269" key="3">
    <source>
    </source>
</evidence>
<evidence type="ECO:0000305" key="4"/>
<evidence type="ECO:0000305" key="5">
    <source>
    </source>
</evidence>
<reference key="1">
    <citation type="journal article" date="1998" name="Nature">
        <title>Deciphering the biology of Mycobacterium tuberculosis from the complete genome sequence.</title>
        <authorList>
            <person name="Cole S.T."/>
            <person name="Brosch R."/>
            <person name="Parkhill J."/>
            <person name="Garnier T."/>
            <person name="Churcher C.M."/>
            <person name="Harris D.E."/>
            <person name="Gordon S.V."/>
            <person name="Eiglmeier K."/>
            <person name="Gas S."/>
            <person name="Barry C.E. III"/>
            <person name="Tekaia F."/>
            <person name="Badcock K."/>
            <person name="Basham D."/>
            <person name="Brown D."/>
            <person name="Chillingworth T."/>
            <person name="Connor R."/>
            <person name="Davies R.M."/>
            <person name="Devlin K."/>
            <person name="Feltwell T."/>
            <person name="Gentles S."/>
            <person name="Hamlin N."/>
            <person name="Holroyd S."/>
            <person name="Hornsby T."/>
            <person name="Jagels K."/>
            <person name="Krogh A."/>
            <person name="McLean J."/>
            <person name="Moule S."/>
            <person name="Murphy L.D."/>
            <person name="Oliver S."/>
            <person name="Osborne J."/>
            <person name="Quail M.A."/>
            <person name="Rajandream M.A."/>
            <person name="Rogers J."/>
            <person name="Rutter S."/>
            <person name="Seeger K."/>
            <person name="Skelton S."/>
            <person name="Squares S."/>
            <person name="Squares R."/>
            <person name="Sulston J.E."/>
            <person name="Taylor K."/>
            <person name="Whitehead S."/>
            <person name="Barrell B.G."/>
        </authorList>
    </citation>
    <scope>NUCLEOTIDE SEQUENCE [LARGE SCALE GENOMIC DNA]</scope>
    <source>
        <strain>ATCC 25618 / H37Rv</strain>
    </source>
</reference>
<reference key="2">
    <citation type="journal article" date="2008" name="Mol. Microbiol.">
        <title>Identification of a novel alpha(1--&gt;6) mannopyranosyltransferase MptB from Corynebacterium glutamicum by deletion of a conserved gene, NCgl1505, affords a lipomannan- and lipoarabinomannan-deficient mutant.</title>
        <authorList>
            <person name="Mishra A.K."/>
            <person name="Alderwick L.J."/>
            <person name="Rittmann D."/>
            <person name="Wang C."/>
            <person name="Bhatt A."/>
            <person name="Jacobs W.R. Jr."/>
            <person name="Takayama K."/>
            <person name="Eggeling L."/>
            <person name="Besra G.S."/>
        </authorList>
    </citation>
    <scope>FUNCTION</scope>
    <scope>SUBCELLULAR LOCATION</scope>
</reference>
<reference key="3">
    <citation type="journal article" date="2011" name="Mol. Cell. Proteomics">
        <title>Proteogenomic analysis of Mycobacterium tuberculosis by high resolution mass spectrometry.</title>
        <authorList>
            <person name="Kelkar D.S."/>
            <person name="Kumar D."/>
            <person name="Kumar P."/>
            <person name="Balakrishnan L."/>
            <person name="Muthusamy B."/>
            <person name="Yadav A.K."/>
            <person name="Shrivastava P."/>
            <person name="Marimuthu A."/>
            <person name="Anand S."/>
            <person name="Sundaram H."/>
            <person name="Kingsbury R."/>
            <person name="Harsha H.C."/>
            <person name="Nair B."/>
            <person name="Prasad T.S."/>
            <person name="Chauhan D.S."/>
            <person name="Katoch K."/>
            <person name="Katoch V.M."/>
            <person name="Kumar P."/>
            <person name="Chaerkady R."/>
            <person name="Ramachandran S."/>
            <person name="Dash D."/>
            <person name="Pandey A."/>
        </authorList>
    </citation>
    <scope>IDENTIFICATION BY MASS SPECTROMETRY [LARGE SCALE ANALYSIS]</scope>
    <source>
        <strain>ATCC 25618 / H37Rv</strain>
    </source>
</reference>
<proteinExistence type="evidence at protein level"/>
<gene>
    <name type="ordered locus">Rv1459c</name>
</gene>
<organism>
    <name type="scientific">Mycobacterium tuberculosis (strain ATCC 25618 / H37Rv)</name>
    <dbReference type="NCBI Taxonomy" id="83332"/>
    <lineage>
        <taxon>Bacteria</taxon>
        <taxon>Bacillati</taxon>
        <taxon>Actinomycetota</taxon>
        <taxon>Actinomycetes</taxon>
        <taxon>Mycobacteriales</taxon>
        <taxon>Mycobacteriaceae</taxon>
        <taxon>Mycobacterium</taxon>
        <taxon>Mycobacterium tuberculosis complex</taxon>
    </lineage>
</organism>
<sequence length="591" mass="62693">MAARHHTLSWSIASLHGDEQAVGAPLTTTELTALARTRLFGATGTVLMAIGALGAGARPVVQDPTFGVRLLNLPSRIQTVSLTMTTTGAVMMALAWLMLGRFTLGRRRMSRGKLDRTLLLWMLPLLIAPPMYSKDVYSYLAQSEIGRDGLDPYRVGPASGLGLGHVFTLSVPSLWRETPAPYGPLFLWIGRGISSLTGENIVAAVLCHRLVVLIGVTLIVWATPRLAQRCGVAEVSALWLGAANPLLIMHLVAGIHNEALMLGLMLTGVEFALRGLDMANTPRPSPETWRLGPATIRASRRPELGASPRAGASRAVKPRPEWGPLAMLLAGSILITLSSQVKLPSLLAMGFVTTVLAYRWGGNLRALLLAAAVMASLTLAIMAILGWASGLGFGWINTLGTANVVRSWMSPPTLLALGTGHVGILLGLGDHTTAVLSLTRAIGVLIITVMVCWLLLAVLRGRLHPIGGLGVALAVTVLLFPVVQPWYLLWAIIPLAAWATRPGFRVAAILATLIVGIFGPTANGDRFALFQIVDATAASAIIVILLIALTYTRLPWRPLAAEQVVTAAESASKTPATRRPTAAPDAYADST</sequence>
<keyword id="KW-0328">Glycosyltransferase</keyword>
<keyword id="KW-0472">Membrane</keyword>
<keyword id="KW-1185">Reference proteome</keyword>
<keyword id="KW-0808">Transferase</keyword>
<keyword id="KW-0812">Transmembrane</keyword>
<keyword id="KW-1133">Transmembrane helix</keyword>
<protein>
    <recommendedName>
        <fullName>Alpha-(1-&gt;6)-mannopyranosyltransferase Rv1459c</fullName>
        <ecNumber>2.4.1.-</ecNumber>
    </recommendedName>
</protein>
<dbReference type="EC" id="2.4.1.-"/>
<dbReference type="EMBL" id="AL123456">
    <property type="protein sequence ID" value="CCP44218.1"/>
    <property type="molecule type" value="Genomic_DNA"/>
</dbReference>
<dbReference type="PIR" id="F70871">
    <property type="entry name" value="F70871"/>
</dbReference>
<dbReference type="RefSeq" id="NP_215975.1">
    <property type="nucleotide sequence ID" value="NC_000962.3"/>
</dbReference>
<dbReference type="FunCoup" id="O53150">
    <property type="interactions" value="12"/>
</dbReference>
<dbReference type="STRING" id="83332.Rv1459c"/>
<dbReference type="PaxDb" id="83332-Rv1459c"/>
<dbReference type="DNASU" id="886585"/>
<dbReference type="GeneID" id="886585"/>
<dbReference type="KEGG" id="mtu:Rv1459c"/>
<dbReference type="KEGG" id="mtv:RVBD_1459c"/>
<dbReference type="TubercuList" id="Rv1459c"/>
<dbReference type="eggNOG" id="ENOG5032QSS">
    <property type="taxonomic scope" value="Bacteria"/>
</dbReference>
<dbReference type="InParanoid" id="O53150"/>
<dbReference type="OrthoDB" id="5242303at2"/>
<dbReference type="PhylomeDB" id="O53150"/>
<dbReference type="Proteomes" id="UP000001584">
    <property type="component" value="Chromosome"/>
</dbReference>
<dbReference type="GO" id="GO:0016020">
    <property type="term" value="C:membrane"/>
    <property type="evidence" value="ECO:0007669"/>
    <property type="project" value="UniProtKB-SubCell"/>
</dbReference>
<dbReference type="GO" id="GO:0016757">
    <property type="term" value="F:glycosyltransferase activity"/>
    <property type="evidence" value="ECO:0007669"/>
    <property type="project" value="UniProtKB-KW"/>
</dbReference>
<dbReference type="InterPro" id="IPR049829">
    <property type="entry name" value="MptA/B-like"/>
</dbReference>
<dbReference type="NCBIfam" id="NF038066">
    <property type="entry name" value="MptB"/>
    <property type="match status" value="1"/>
</dbReference>